<keyword id="KW-0903">Direct protein sequencing</keyword>
<keyword id="KW-0378">Hydrolase</keyword>
<keyword id="KW-0574">Periplasm</keyword>
<keyword id="KW-0645">Protease</keyword>
<keyword id="KW-0720">Serine protease</keyword>
<keyword id="KW-0732">Signal</keyword>
<protein>
    <recommendedName>
        <fullName>Prolyl endopeptidase</fullName>
        <ecNumber>3.4.21.26</ecNumber>
    </recommendedName>
    <alternativeName>
        <fullName>Post-proline cleaving enzyme</fullName>
    </alternativeName>
    <alternativeName>
        <fullName>Proline-specific endopeptidase</fullName>
        <shortName>PE</shortName>
        <shortName>PSE</shortName>
    </alternativeName>
</protein>
<accession>P27195</accession>
<sequence>MKYKKLSVAVAAFAFAAVSAQNSNSLKYPETKKVNHTDTYFGNQVSDPYRWLEDDRAEDTKAWVQQEVKFTQDYLAQIPFRGQIKKQLLDIWNYEKISAPFKKGKYTYFYKNDGLQAQSVLYRKDASGKTEVFLDPNKFSDKGTTSLANLSFNKKGTLVAYSISEGGSDWNKIIILDAETKKQIDETLLDVKFSGISWLGDEGFFYSSYDKPKDGSVLSGMTDKHKVYFHKLGTKQSQDELIIGGDKFPRRYLSGYVTEDQRYLVVSAANATNGNELYIKDLKNKTDFIPIITGFESNVGLVDTDGDTLFLHTDKNAPNMRMVKTTIQNPKPETWKDVIAETSEPMRVNSGGGYFFATYMKDALSQIKQYDKTGKLVREIKLPGSGTAGGFGGEKTEKELYYSFTNYITPPTIFKFSIDSGKSEVYQKPKVKFNPENYVSEQVFYTSADGTKIPMMISNKKGLKKDGKNPTILYSYGGFNISLQPAFSVVNAIWMENGGIYAVPNIRGGGEYGKKWHDAGTKQQKKNVFNDFIAAGEYLQKNGYTSKDYMALSGRSNGGLLVGATMTMRPDLAKVAFPGVGVLDMLRYNKFTAGAGWAYDYGTAEDSKEMFEYLKSYSPVHNVKAGTCYPSTMVITSDHDDRVVPAHSFKFGAELQAKQACKNPVLIRIETNAGHGAGRSTEQVVMENADLLSFALYEMGIKNLK</sequence>
<organism>
    <name type="scientific">Elizabethkingia miricola</name>
    <name type="common">Chryseobacterium miricola</name>
    <dbReference type="NCBI Taxonomy" id="172045"/>
    <lineage>
        <taxon>Bacteria</taxon>
        <taxon>Pseudomonadati</taxon>
        <taxon>Bacteroidota</taxon>
        <taxon>Flavobacteriia</taxon>
        <taxon>Flavobacteriales</taxon>
        <taxon>Weeksellaceae</taxon>
        <taxon>Elizabethkingia</taxon>
    </lineage>
</organism>
<name>PPCF_ELIMR</name>
<proteinExistence type="evidence at protein level"/>
<dbReference type="EC" id="3.4.21.26"/>
<dbReference type="EMBL" id="M81461">
    <property type="protein sequence ID" value="AAA24925.1"/>
    <property type="molecule type" value="Genomic_DNA"/>
</dbReference>
<dbReference type="SMR" id="P27195"/>
<dbReference type="ESTHER" id="elimr-ppcf">
    <property type="family name" value="S9N_PPCE_Peptidase_S9"/>
</dbReference>
<dbReference type="eggNOG" id="COG1505">
    <property type="taxonomic scope" value="Bacteria"/>
</dbReference>
<dbReference type="GO" id="GO:0005829">
    <property type="term" value="C:cytosol"/>
    <property type="evidence" value="ECO:0007669"/>
    <property type="project" value="TreeGrafter"/>
</dbReference>
<dbReference type="GO" id="GO:0042597">
    <property type="term" value="C:periplasmic space"/>
    <property type="evidence" value="ECO:0007669"/>
    <property type="project" value="UniProtKB-SubCell"/>
</dbReference>
<dbReference type="GO" id="GO:0070012">
    <property type="term" value="F:oligopeptidase activity"/>
    <property type="evidence" value="ECO:0007669"/>
    <property type="project" value="TreeGrafter"/>
</dbReference>
<dbReference type="GO" id="GO:0004252">
    <property type="term" value="F:serine-type endopeptidase activity"/>
    <property type="evidence" value="ECO:0007669"/>
    <property type="project" value="UniProtKB-EC"/>
</dbReference>
<dbReference type="GO" id="GO:0006508">
    <property type="term" value="P:proteolysis"/>
    <property type="evidence" value="ECO:0007669"/>
    <property type="project" value="UniProtKB-KW"/>
</dbReference>
<dbReference type="FunFam" id="3.40.50.1820:FF:000005">
    <property type="entry name" value="Prolyl endopeptidase"/>
    <property type="match status" value="1"/>
</dbReference>
<dbReference type="Gene3D" id="3.40.50.1820">
    <property type="entry name" value="alpha/beta hydrolase"/>
    <property type="match status" value="1"/>
</dbReference>
<dbReference type="Gene3D" id="2.130.10.120">
    <property type="entry name" value="Prolyl oligopeptidase, N-terminal domain"/>
    <property type="match status" value="1"/>
</dbReference>
<dbReference type="InterPro" id="IPR029058">
    <property type="entry name" value="AB_hydrolase_fold"/>
</dbReference>
<dbReference type="InterPro" id="IPR002471">
    <property type="entry name" value="Pept_S9_AS"/>
</dbReference>
<dbReference type="InterPro" id="IPR023302">
    <property type="entry name" value="Pept_S9A_N"/>
</dbReference>
<dbReference type="InterPro" id="IPR001375">
    <property type="entry name" value="Peptidase_S9_cat"/>
</dbReference>
<dbReference type="InterPro" id="IPR002470">
    <property type="entry name" value="Peptidase_S9A"/>
</dbReference>
<dbReference type="InterPro" id="IPR051167">
    <property type="entry name" value="Prolyl_oligopep/macrocyclase"/>
</dbReference>
<dbReference type="PANTHER" id="PTHR42881">
    <property type="entry name" value="PROLYL ENDOPEPTIDASE"/>
    <property type="match status" value="1"/>
</dbReference>
<dbReference type="PANTHER" id="PTHR42881:SF2">
    <property type="entry name" value="PROLYL ENDOPEPTIDASE"/>
    <property type="match status" value="1"/>
</dbReference>
<dbReference type="Pfam" id="PF00326">
    <property type="entry name" value="Peptidase_S9"/>
    <property type="match status" value="1"/>
</dbReference>
<dbReference type="Pfam" id="PF02897">
    <property type="entry name" value="Peptidase_S9_N"/>
    <property type="match status" value="1"/>
</dbReference>
<dbReference type="PRINTS" id="PR00862">
    <property type="entry name" value="PROLIGOPTASE"/>
</dbReference>
<dbReference type="SUPFAM" id="SSF53474">
    <property type="entry name" value="alpha/beta-Hydrolases"/>
    <property type="match status" value="1"/>
</dbReference>
<dbReference type="SUPFAM" id="SSF50993">
    <property type="entry name" value="Peptidase/esterase 'gauge' domain"/>
    <property type="match status" value="1"/>
</dbReference>
<dbReference type="PROSITE" id="PS00708">
    <property type="entry name" value="PRO_ENDOPEP_SER"/>
    <property type="match status" value="1"/>
</dbReference>
<evidence type="ECO:0000255" key="1">
    <source>
        <dbReference type="PROSITE-ProRule" id="PRU10084"/>
    </source>
</evidence>
<evidence type="ECO:0000305" key="2"/>
<reference key="1">
    <citation type="journal article" date="1992" name="J. Biol. Chem.">
        <title>Characterization of a prolyl endopeptidase from Flavobacterium meningosepticum. Complete sequence and localization of the active-site serine.</title>
        <authorList>
            <person name="Chevallier S."/>
            <person name="Goeltz P."/>
            <person name="Thibault P."/>
            <person name="Banville D."/>
            <person name="Gagnon J."/>
        </authorList>
    </citation>
    <scope>NUCLEOTIDE SEQUENCE [GENOMIC DNA]</scope>
    <scope>PARTIAL PROTEIN SEQUENCE</scope>
    <source>
        <strain>ATCC 33958</strain>
    </source>
</reference>
<comment type="function">
    <text>Cleaves peptide bonds on the C-terminal side of prolyl residues within peptides that are up to approximately 30 amino acids long. Has an absolute requirement for an X-Pro bond in the trans configuration immediately preceding the Pro-Y scissible bond.</text>
</comment>
<comment type="catalytic activity">
    <reaction>
        <text>Hydrolysis of Pro-|-Xaa &gt;&gt; Ala-|-Xaa in oligopeptides.</text>
        <dbReference type="EC" id="3.4.21.26"/>
    </reaction>
</comment>
<comment type="subunit">
    <text>Monomer.</text>
</comment>
<comment type="subcellular location">
    <subcellularLocation>
        <location>Periplasm</location>
    </subcellularLocation>
</comment>
<comment type="similarity">
    <text evidence="2">Belongs to the peptidase S9A family.</text>
</comment>
<feature type="signal peptide">
    <location>
        <begin position="1"/>
        <end position="20"/>
    </location>
</feature>
<feature type="chain" id="PRO_0000027208" description="Prolyl endopeptidase">
    <location>
        <begin position="21"/>
        <end position="705"/>
    </location>
</feature>
<feature type="active site" description="Charge relay system">
    <location>
        <position position="556"/>
    </location>
</feature>
<feature type="active site" description="Charge relay system" evidence="1">
    <location>
        <position position="675"/>
    </location>
</feature>